<keyword id="KW-0238">DNA-binding</keyword>
<keyword id="KW-0255">Endonuclease</keyword>
<keyword id="KW-0378">Hydrolase</keyword>
<keyword id="KW-0460">Magnesium</keyword>
<keyword id="KW-0479">Metal-binding</keyword>
<keyword id="KW-0540">Nuclease</keyword>
<keyword id="KW-0630">Potassium</keyword>
<keyword id="KW-1185">Reference proteome</keyword>
<sequence length="259" mass="28963">MSLHLVIIDALNLIRRVHSAQPDPNDITRTAETTTRTLQRIINEAQPSHMIAVFDHHLSDRGWRAELLPTYKANRKPMPDVLQQGIDAIQDAWWQLGIDSLLSEGDEADDLVATLACKVAAHQEKVTIISTDKGYCQLLSPTLQIRDYFQQRWLDEPFIAQEFGVTPAQLTDYWGLTGVSSSQIPGVAGIGPKAAKEILNQFSSIEEAYASPELPAKYRKKLDPHIEMARICKQVSALKTDIELGFNLQDIRFNSSSAD</sequence>
<reference key="1">
    <citation type="journal article" date="2000" name="Nature">
        <title>DNA sequence of both chromosomes of the cholera pathogen Vibrio cholerae.</title>
        <authorList>
            <person name="Heidelberg J.F."/>
            <person name="Eisen J.A."/>
            <person name="Nelson W.C."/>
            <person name="Clayton R.A."/>
            <person name="Gwinn M.L."/>
            <person name="Dodson R.J."/>
            <person name="Haft D.H."/>
            <person name="Hickey E.K."/>
            <person name="Peterson J.D."/>
            <person name="Umayam L.A."/>
            <person name="Gill S.R."/>
            <person name="Nelson K.E."/>
            <person name="Read T.D."/>
            <person name="Tettelin H."/>
            <person name="Richardson D.L."/>
            <person name="Ermolaeva M.D."/>
            <person name="Vamathevan J.J."/>
            <person name="Bass S."/>
            <person name="Qin H."/>
            <person name="Dragoi I."/>
            <person name="Sellers P."/>
            <person name="McDonald L.A."/>
            <person name="Utterback T.R."/>
            <person name="Fleischmann R.D."/>
            <person name="Nierman W.C."/>
            <person name="White O."/>
            <person name="Salzberg S.L."/>
            <person name="Smith H.O."/>
            <person name="Colwell R.R."/>
            <person name="Mekalanos J.J."/>
            <person name="Venter J.C."/>
            <person name="Fraser C.M."/>
        </authorList>
    </citation>
    <scope>NUCLEOTIDE SEQUENCE [LARGE SCALE GENOMIC DNA]</scope>
    <source>
        <strain>ATCC 39315 / El Tor Inaba N16961</strain>
    </source>
</reference>
<evidence type="ECO:0000255" key="1">
    <source>
        <dbReference type="HAMAP-Rule" id="MF_01192"/>
    </source>
</evidence>
<evidence type="ECO:0000305" key="2"/>
<name>XNI_VIBCH</name>
<protein>
    <recommendedName>
        <fullName evidence="1">Flap endonuclease Xni</fullName>
        <shortName evidence="1">FEN</shortName>
        <ecNumber evidence="1">3.1.-.-</ecNumber>
    </recommendedName>
</protein>
<proteinExistence type="inferred from homology"/>
<feature type="chain" id="PRO_0000101293" description="Flap endonuclease Xni">
    <location>
        <begin position="1"/>
        <end position="259"/>
    </location>
</feature>
<feature type="domain" description="5'-3' exonuclease" evidence="1">
    <location>
        <begin position="165"/>
        <end position="255"/>
    </location>
</feature>
<feature type="region of interest" description="Interaction with DNA" evidence="1">
    <location>
        <begin position="189"/>
        <end position="194"/>
    </location>
</feature>
<feature type="binding site" evidence="1">
    <location>
        <position position="109"/>
    </location>
    <ligand>
        <name>Mg(2+)</name>
        <dbReference type="ChEBI" id="CHEBI:18420"/>
    </ligand>
</feature>
<feature type="binding site" evidence="1">
    <location>
        <position position="176"/>
    </location>
    <ligand>
        <name>K(+)</name>
        <dbReference type="ChEBI" id="CHEBI:29103"/>
    </ligand>
</feature>
<feature type="binding site" evidence="1">
    <location>
        <position position="185"/>
    </location>
    <ligand>
        <name>K(+)</name>
        <dbReference type="ChEBI" id="CHEBI:29103"/>
    </ligand>
</feature>
<feature type="binding site" evidence="1">
    <location>
        <position position="187"/>
    </location>
    <ligand>
        <name>K(+)</name>
        <dbReference type="ChEBI" id="CHEBI:29103"/>
    </ligand>
</feature>
<feature type="binding site" evidence="1">
    <location>
        <position position="190"/>
    </location>
    <ligand>
        <name>K(+)</name>
        <dbReference type="ChEBI" id="CHEBI:29103"/>
    </ligand>
</feature>
<gene>
    <name evidence="1" type="primary">xni</name>
    <name evidence="1" type="synonym">ygdG</name>
    <name type="ordered locus">VC_0898</name>
</gene>
<dbReference type="EC" id="3.1.-.-" evidence="1"/>
<dbReference type="EMBL" id="AE003852">
    <property type="protein sequence ID" value="AAF94060.1"/>
    <property type="status" value="ALT_INIT"/>
    <property type="molecule type" value="Genomic_DNA"/>
</dbReference>
<dbReference type="PIR" id="A82268">
    <property type="entry name" value="A82268"/>
</dbReference>
<dbReference type="RefSeq" id="NP_230545.1">
    <property type="nucleotide sequence ID" value="NC_002505.1"/>
</dbReference>
<dbReference type="RefSeq" id="WP_000052130.1">
    <property type="nucleotide sequence ID" value="NZ_LT906614.1"/>
</dbReference>
<dbReference type="SMR" id="Q9KTK4"/>
<dbReference type="STRING" id="243277.VC_0898"/>
<dbReference type="DNASU" id="2614127"/>
<dbReference type="EnsemblBacteria" id="AAF94060">
    <property type="protein sequence ID" value="AAF94060"/>
    <property type="gene ID" value="VC_0898"/>
</dbReference>
<dbReference type="KEGG" id="vch:VC_0898"/>
<dbReference type="PATRIC" id="fig|243277.26.peg.855"/>
<dbReference type="eggNOG" id="COG0258">
    <property type="taxonomic scope" value="Bacteria"/>
</dbReference>
<dbReference type="HOGENOM" id="CLU_004675_1_2_6"/>
<dbReference type="Proteomes" id="UP000000584">
    <property type="component" value="Chromosome 1"/>
</dbReference>
<dbReference type="GO" id="GO:0008409">
    <property type="term" value="F:5'-3' exonuclease activity"/>
    <property type="evidence" value="ECO:0007669"/>
    <property type="project" value="InterPro"/>
</dbReference>
<dbReference type="GO" id="GO:0017108">
    <property type="term" value="F:5'-flap endonuclease activity"/>
    <property type="evidence" value="ECO:0000318"/>
    <property type="project" value="GO_Central"/>
</dbReference>
<dbReference type="GO" id="GO:0003677">
    <property type="term" value="F:DNA binding"/>
    <property type="evidence" value="ECO:0007669"/>
    <property type="project" value="UniProtKB-UniRule"/>
</dbReference>
<dbReference type="GO" id="GO:0000287">
    <property type="term" value="F:magnesium ion binding"/>
    <property type="evidence" value="ECO:0007669"/>
    <property type="project" value="UniProtKB-UniRule"/>
</dbReference>
<dbReference type="GO" id="GO:0030955">
    <property type="term" value="F:potassium ion binding"/>
    <property type="evidence" value="ECO:0007669"/>
    <property type="project" value="UniProtKB-UniRule"/>
</dbReference>
<dbReference type="GO" id="GO:0033567">
    <property type="term" value="P:DNA replication, Okazaki fragment processing"/>
    <property type="evidence" value="ECO:0000318"/>
    <property type="project" value="GO_Central"/>
</dbReference>
<dbReference type="CDD" id="cd09898">
    <property type="entry name" value="H3TH_53EXO"/>
    <property type="match status" value="1"/>
</dbReference>
<dbReference type="CDD" id="cd09859">
    <property type="entry name" value="PIN_53EXO"/>
    <property type="match status" value="1"/>
</dbReference>
<dbReference type="FunFam" id="1.10.150.20:FF:000003">
    <property type="entry name" value="DNA polymerase I"/>
    <property type="match status" value="1"/>
</dbReference>
<dbReference type="Gene3D" id="1.10.150.20">
    <property type="entry name" value="5' to 3' exonuclease, C-terminal subdomain"/>
    <property type="match status" value="1"/>
</dbReference>
<dbReference type="Gene3D" id="3.40.50.1010">
    <property type="entry name" value="5'-nuclease"/>
    <property type="match status" value="1"/>
</dbReference>
<dbReference type="HAMAP" id="MF_01192">
    <property type="entry name" value="Xni"/>
    <property type="match status" value="1"/>
</dbReference>
<dbReference type="InterPro" id="IPR020046">
    <property type="entry name" value="5-3_exonucl_a-hlix_arch_N"/>
</dbReference>
<dbReference type="InterPro" id="IPR002421">
    <property type="entry name" value="5-3_exonuclease"/>
</dbReference>
<dbReference type="InterPro" id="IPR036279">
    <property type="entry name" value="5-3_exonuclease_C_sf"/>
</dbReference>
<dbReference type="InterPro" id="IPR020045">
    <property type="entry name" value="DNA_polI_H3TH"/>
</dbReference>
<dbReference type="InterPro" id="IPR038969">
    <property type="entry name" value="FEN"/>
</dbReference>
<dbReference type="InterPro" id="IPR008918">
    <property type="entry name" value="HhH2"/>
</dbReference>
<dbReference type="InterPro" id="IPR029060">
    <property type="entry name" value="PIN-like_dom_sf"/>
</dbReference>
<dbReference type="InterPro" id="IPR022895">
    <property type="entry name" value="Xni"/>
</dbReference>
<dbReference type="NCBIfam" id="NF007017">
    <property type="entry name" value="PRK09482.1"/>
    <property type="match status" value="1"/>
</dbReference>
<dbReference type="PANTHER" id="PTHR42646:SF2">
    <property type="entry name" value="5'-3' EXONUCLEASE FAMILY PROTEIN"/>
    <property type="match status" value="1"/>
</dbReference>
<dbReference type="PANTHER" id="PTHR42646">
    <property type="entry name" value="FLAP ENDONUCLEASE XNI"/>
    <property type="match status" value="1"/>
</dbReference>
<dbReference type="Pfam" id="PF01367">
    <property type="entry name" value="5_3_exonuc"/>
    <property type="match status" value="1"/>
</dbReference>
<dbReference type="Pfam" id="PF02739">
    <property type="entry name" value="5_3_exonuc_N"/>
    <property type="match status" value="1"/>
</dbReference>
<dbReference type="SMART" id="SM00475">
    <property type="entry name" value="53EXOc"/>
    <property type="match status" value="1"/>
</dbReference>
<dbReference type="SMART" id="SM00279">
    <property type="entry name" value="HhH2"/>
    <property type="match status" value="1"/>
</dbReference>
<dbReference type="SUPFAM" id="SSF47807">
    <property type="entry name" value="5' to 3' exonuclease, C-terminal subdomain"/>
    <property type="match status" value="1"/>
</dbReference>
<dbReference type="SUPFAM" id="SSF88723">
    <property type="entry name" value="PIN domain-like"/>
    <property type="match status" value="1"/>
</dbReference>
<accession>Q9KTK4</accession>
<comment type="function">
    <text evidence="1">Has flap endonuclease activity. During DNA replication, flap endonucleases cleave the 5'-overhanging flap structure that is generated by displacement synthesis when DNA polymerase encounters the 5'-end of a downstream Okazaki fragment.</text>
</comment>
<comment type="cofactor">
    <cofactor evidence="1">
        <name>Mg(2+)</name>
        <dbReference type="ChEBI" id="CHEBI:18420"/>
    </cofactor>
    <text evidence="1">Binds 2 Mg(2+) per subunit. Only one magnesium ion has a direct interaction with the protein, the other interactions are indirect.</text>
</comment>
<comment type="cofactor">
    <cofactor evidence="1">
        <name>K(+)</name>
        <dbReference type="ChEBI" id="CHEBI:29103"/>
    </cofactor>
    <text evidence="1">Binds 1 K(+) per subunit. The potassium ion strongly increases the affinity for DNA.</text>
</comment>
<comment type="similarity">
    <text evidence="1">Belongs to the Xni family.</text>
</comment>
<comment type="sequence caution" evidence="2">
    <conflict type="erroneous initiation">
        <sequence resource="EMBL-CDS" id="AAF94060"/>
    </conflict>
    <text>Extended N-terminus.</text>
</comment>
<organism>
    <name type="scientific">Vibrio cholerae serotype O1 (strain ATCC 39315 / El Tor Inaba N16961)</name>
    <dbReference type="NCBI Taxonomy" id="243277"/>
    <lineage>
        <taxon>Bacteria</taxon>
        <taxon>Pseudomonadati</taxon>
        <taxon>Pseudomonadota</taxon>
        <taxon>Gammaproteobacteria</taxon>
        <taxon>Vibrionales</taxon>
        <taxon>Vibrionaceae</taxon>
        <taxon>Vibrio</taxon>
    </lineage>
</organism>